<organism>
    <name type="scientific">Mus musculus</name>
    <name type="common">Mouse</name>
    <dbReference type="NCBI Taxonomy" id="10090"/>
    <lineage>
        <taxon>Eukaryota</taxon>
        <taxon>Metazoa</taxon>
        <taxon>Chordata</taxon>
        <taxon>Craniata</taxon>
        <taxon>Vertebrata</taxon>
        <taxon>Euteleostomi</taxon>
        <taxon>Mammalia</taxon>
        <taxon>Eutheria</taxon>
        <taxon>Euarchontoglires</taxon>
        <taxon>Glires</taxon>
        <taxon>Rodentia</taxon>
        <taxon>Myomorpha</taxon>
        <taxon>Muroidea</taxon>
        <taxon>Muridae</taxon>
        <taxon>Murinae</taxon>
        <taxon>Mus</taxon>
        <taxon>Mus</taxon>
    </lineage>
</organism>
<protein>
    <recommendedName>
        <fullName>Ras-specific guanine nucleotide-releasing factor RalGPS2</fullName>
    </recommendedName>
    <alternativeName>
        <fullName>Ral GEF with PH domain and SH3-binding motif 2</fullName>
    </alternativeName>
    <alternativeName>
        <fullName>RalA exchange factor RalGPS2</fullName>
    </alternativeName>
</protein>
<evidence type="ECO:0000250" key="1"/>
<evidence type="ECO:0000250" key="2">
    <source>
        <dbReference type="UniProtKB" id="Q86X27"/>
    </source>
</evidence>
<evidence type="ECO:0000255" key="3">
    <source>
        <dbReference type="PROSITE-ProRule" id="PRU00145"/>
    </source>
</evidence>
<evidence type="ECO:0000255" key="4">
    <source>
        <dbReference type="PROSITE-ProRule" id="PRU00168"/>
    </source>
</evidence>
<evidence type="ECO:0000256" key="5">
    <source>
        <dbReference type="SAM" id="MobiDB-lite"/>
    </source>
</evidence>
<evidence type="ECO:0000269" key="6">
    <source>
    </source>
</evidence>
<evidence type="ECO:0000303" key="7">
    <source>
    </source>
</evidence>
<evidence type="ECO:0000303" key="8">
    <source>
    </source>
</evidence>
<evidence type="ECO:0000305" key="9"/>
<evidence type="ECO:0007744" key="10">
    <source>
    </source>
</evidence>
<evidence type="ECO:0007744" key="11">
    <source>
    </source>
</evidence>
<accession>Q9ERD6</accession>
<accession>Q7TPZ6</accession>
<accession>Q80YA6</accession>
<accession>Q8BZ37</accession>
<accession>Q8BZU2</accession>
<accession>Q9D2Y7</accession>
<proteinExistence type="evidence at protein level"/>
<reference key="1">
    <citation type="journal article" date="2002" name="Ann. N. Y. Acad. Sci.">
        <title>Cloning and characterization of a new Ral-GEF expressed in mouse testis.</title>
        <authorList>
            <person name="Martegani E."/>
            <person name="Ceriani M."/>
            <person name="Tisi R."/>
            <person name="Berruti G."/>
        </authorList>
    </citation>
    <scope>NUCLEOTIDE SEQUENCE [MRNA] (ISOFORM 1)</scope>
    <source>
        <strain>BALB/cJ</strain>
        <tissue>Testis</tissue>
    </source>
</reference>
<reference key="2">
    <citation type="journal article" date="2005" name="Science">
        <title>The transcriptional landscape of the mammalian genome.</title>
        <authorList>
            <person name="Carninci P."/>
            <person name="Kasukawa T."/>
            <person name="Katayama S."/>
            <person name="Gough J."/>
            <person name="Frith M.C."/>
            <person name="Maeda N."/>
            <person name="Oyama R."/>
            <person name="Ravasi T."/>
            <person name="Lenhard B."/>
            <person name="Wells C."/>
            <person name="Kodzius R."/>
            <person name="Shimokawa K."/>
            <person name="Bajic V.B."/>
            <person name="Brenner S.E."/>
            <person name="Batalov S."/>
            <person name="Forrest A.R."/>
            <person name="Zavolan M."/>
            <person name="Davis M.J."/>
            <person name="Wilming L.G."/>
            <person name="Aidinis V."/>
            <person name="Allen J.E."/>
            <person name="Ambesi-Impiombato A."/>
            <person name="Apweiler R."/>
            <person name="Aturaliya R.N."/>
            <person name="Bailey T.L."/>
            <person name="Bansal M."/>
            <person name="Baxter L."/>
            <person name="Beisel K.W."/>
            <person name="Bersano T."/>
            <person name="Bono H."/>
            <person name="Chalk A.M."/>
            <person name="Chiu K.P."/>
            <person name="Choudhary V."/>
            <person name="Christoffels A."/>
            <person name="Clutterbuck D.R."/>
            <person name="Crowe M.L."/>
            <person name="Dalla E."/>
            <person name="Dalrymple B.P."/>
            <person name="de Bono B."/>
            <person name="Della Gatta G."/>
            <person name="di Bernardo D."/>
            <person name="Down T."/>
            <person name="Engstrom P."/>
            <person name="Fagiolini M."/>
            <person name="Faulkner G."/>
            <person name="Fletcher C.F."/>
            <person name="Fukushima T."/>
            <person name="Furuno M."/>
            <person name="Futaki S."/>
            <person name="Gariboldi M."/>
            <person name="Georgii-Hemming P."/>
            <person name="Gingeras T.R."/>
            <person name="Gojobori T."/>
            <person name="Green R.E."/>
            <person name="Gustincich S."/>
            <person name="Harbers M."/>
            <person name="Hayashi Y."/>
            <person name="Hensch T.K."/>
            <person name="Hirokawa N."/>
            <person name="Hill D."/>
            <person name="Huminiecki L."/>
            <person name="Iacono M."/>
            <person name="Ikeo K."/>
            <person name="Iwama A."/>
            <person name="Ishikawa T."/>
            <person name="Jakt M."/>
            <person name="Kanapin A."/>
            <person name="Katoh M."/>
            <person name="Kawasawa Y."/>
            <person name="Kelso J."/>
            <person name="Kitamura H."/>
            <person name="Kitano H."/>
            <person name="Kollias G."/>
            <person name="Krishnan S.P."/>
            <person name="Kruger A."/>
            <person name="Kummerfeld S.K."/>
            <person name="Kurochkin I.V."/>
            <person name="Lareau L.F."/>
            <person name="Lazarevic D."/>
            <person name="Lipovich L."/>
            <person name="Liu J."/>
            <person name="Liuni S."/>
            <person name="McWilliam S."/>
            <person name="Madan Babu M."/>
            <person name="Madera M."/>
            <person name="Marchionni L."/>
            <person name="Matsuda H."/>
            <person name="Matsuzawa S."/>
            <person name="Miki H."/>
            <person name="Mignone F."/>
            <person name="Miyake S."/>
            <person name="Morris K."/>
            <person name="Mottagui-Tabar S."/>
            <person name="Mulder N."/>
            <person name="Nakano N."/>
            <person name="Nakauchi H."/>
            <person name="Ng P."/>
            <person name="Nilsson R."/>
            <person name="Nishiguchi S."/>
            <person name="Nishikawa S."/>
            <person name="Nori F."/>
            <person name="Ohara O."/>
            <person name="Okazaki Y."/>
            <person name="Orlando V."/>
            <person name="Pang K.C."/>
            <person name="Pavan W.J."/>
            <person name="Pavesi G."/>
            <person name="Pesole G."/>
            <person name="Petrovsky N."/>
            <person name="Piazza S."/>
            <person name="Reed J."/>
            <person name="Reid J.F."/>
            <person name="Ring B.Z."/>
            <person name="Ringwald M."/>
            <person name="Rost B."/>
            <person name="Ruan Y."/>
            <person name="Salzberg S.L."/>
            <person name="Sandelin A."/>
            <person name="Schneider C."/>
            <person name="Schoenbach C."/>
            <person name="Sekiguchi K."/>
            <person name="Semple C.A."/>
            <person name="Seno S."/>
            <person name="Sessa L."/>
            <person name="Sheng Y."/>
            <person name="Shibata Y."/>
            <person name="Shimada H."/>
            <person name="Shimada K."/>
            <person name="Silva D."/>
            <person name="Sinclair B."/>
            <person name="Sperling S."/>
            <person name="Stupka E."/>
            <person name="Sugiura K."/>
            <person name="Sultana R."/>
            <person name="Takenaka Y."/>
            <person name="Taki K."/>
            <person name="Tammoja K."/>
            <person name="Tan S.L."/>
            <person name="Tang S."/>
            <person name="Taylor M.S."/>
            <person name="Tegner J."/>
            <person name="Teichmann S.A."/>
            <person name="Ueda H.R."/>
            <person name="van Nimwegen E."/>
            <person name="Verardo R."/>
            <person name="Wei C.L."/>
            <person name="Yagi K."/>
            <person name="Yamanishi H."/>
            <person name="Zabarovsky E."/>
            <person name="Zhu S."/>
            <person name="Zimmer A."/>
            <person name="Hide W."/>
            <person name="Bult C."/>
            <person name="Grimmond S.M."/>
            <person name="Teasdale R.D."/>
            <person name="Liu E.T."/>
            <person name="Brusic V."/>
            <person name="Quackenbush J."/>
            <person name="Wahlestedt C."/>
            <person name="Mattick J.S."/>
            <person name="Hume D.A."/>
            <person name="Kai C."/>
            <person name="Sasaki D."/>
            <person name="Tomaru Y."/>
            <person name="Fukuda S."/>
            <person name="Kanamori-Katayama M."/>
            <person name="Suzuki M."/>
            <person name="Aoki J."/>
            <person name="Arakawa T."/>
            <person name="Iida J."/>
            <person name="Imamura K."/>
            <person name="Itoh M."/>
            <person name="Kato T."/>
            <person name="Kawaji H."/>
            <person name="Kawagashira N."/>
            <person name="Kawashima T."/>
            <person name="Kojima M."/>
            <person name="Kondo S."/>
            <person name="Konno H."/>
            <person name="Nakano K."/>
            <person name="Ninomiya N."/>
            <person name="Nishio T."/>
            <person name="Okada M."/>
            <person name="Plessy C."/>
            <person name="Shibata K."/>
            <person name="Shiraki T."/>
            <person name="Suzuki S."/>
            <person name="Tagami M."/>
            <person name="Waki K."/>
            <person name="Watahiki A."/>
            <person name="Okamura-Oho Y."/>
            <person name="Suzuki H."/>
            <person name="Kawai J."/>
            <person name="Hayashizaki Y."/>
        </authorList>
    </citation>
    <scope>NUCLEOTIDE SEQUENCE [LARGE SCALE MRNA] (ISOFORMS 1; 2; 3 AND 4)</scope>
    <source>
        <strain>C57BL/6J</strain>
        <tissue>Cecum</tissue>
        <tissue>Colon</tissue>
        <tissue>Vagina</tissue>
    </source>
</reference>
<reference key="3">
    <citation type="journal article" date="2004" name="Genome Res.">
        <title>The status, quality, and expansion of the NIH full-length cDNA project: the Mammalian Gene Collection (MGC).</title>
        <authorList>
            <consortium name="The MGC Project Team"/>
        </authorList>
    </citation>
    <scope>NUCLEOTIDE SEQUENCE [LARGE SCALE MRNA] (ISOFORMS 1 AND 3)</scope>
    <source>
        <strain>C57BL/6J</strain>
        <tissue>Brain</tissue>
        <tissue>Egg</tissue>
    </source>
</reference>
<reference key="4">
    <citation type="journal article" date="2000" name="J. Biol. Chem.">
        <title>Identification and characterization of a new family of guanine nucleotide exchange factors for the ras-related GTPase Ral.</title>
        <authorList>
            <person name="Rebhun J.F."/>
            <person name="Chen H."/>
            <person name="Quilliam L.A."/>
        </authorList>
    </citation>
    <scope>MOTIF</scope>
</reference>
<reference key="5">
    <citation type="journal article" date="2007" name="Exp. Cell Res.">
        <title>Functional analysis of RalGPS2, a murine guanine nucleotide exchange factor for RalA GTPase.</title>
        <authorList>
            <person name="Ceriani M."/>
            <person name="Scandiuzzi C."/>
            <person name="Amigoni L."/>
            <person name="Tisi R."/>
            <person name="Berruti G."/>
            <person name="Martegani E."/>
        </authorList>
    </citation>
    <scope>FUNCTION</scope>
    <scope>INTERACTION WITH GRB2 AND PLCG1</scope>
    <scope>SUBCELLULAR LOCATION</scope>
    <scope>ALTERNATIVE SPLICING</scope>
    <scope>TISSUE SPECIFICITY</scope>
    <scope>DOMAIN</scope>
    <scope>MOTIF</scope>
</reference>
<reference key="6">
    <citation type="journal article" date="2007" name="Proc. Natl. Acad. Sci. U.S.A.">
        <title>Large-scale phosphorylation analysis of mouse liver.</title>
        <authorList>
            <person name="Villen J."/>
            <person name="Beausoleil S.A."/>
            <person name="Gerber S.A."/>
            <person name="Gygi S.P."/>
        </authorList>
    </citation>
    <scope>PHOSPHORYLATION [LARGE SCALE ANALYSIS] AT SER-308</scope>
    <scope>IDENTIFICATION BY MASS SPECTROMETRY [LARGE SCALE ANALYSIS]</scope>
    <source>
        <tissue>Liver</tissue>
    </source>
</reference>
<reference key="7">
    <citation type="journal article" date="2010" name="Cell">
        <title>A tissue-specific atlas of mouse protein phosphorylation and expression.</title>
        <authorList>
            <person name="Huttlin E.L."/>
            <person name="Jedrychowski M.P."/>
            <person name="Elias J.E."/>
            <person name="Goswami T."/>
            <person name="Rad R."/>
            <person name="Beausoleil S.A."/>
            <person name="Villen J."/>
            <person name="Haas W."/>
            <person name="Sowa M.E."/>
            <person name="Gygi S.P."/>
        </authorList>
    </citation>
    <scope>PHOSPHORYLATION [LARGE SCALE ANALYSIS] AT SER-293; SER-296; SER-308; THR-333; SER-336; SER-350 AND SER-429</scope>
    <scope>IDENTIFICATION BY MASS SPECTROMETRY [LARGE SCALE ANALYSIS]</scope>
    <source>
        <tissue>Heart</tissue>
        <tissue>Kidney</tissue>
        <tissue>Liver</tissue>
        <tissue>Lung</tissue>
        <tissue>Pancreas</tissue>
        <tissue>Spleen</tissue>
        <tissue>Testis</tissue>
    </source>
</reference>
<sequence length="590" mass="65530">MDLMNGQASSVTIAATVSEKSSSSESLSEKGSELKKSFDAVVFDVLKVTPEEYAGQITLMDVPVFKAIQPDELSSCGWNKKEKYSSAPNAVAFTRRFNHVSFWVVREILHAQTLKIRAEVLSHYIKTAKKLYELNNLHALMAVVSGLQSAPIFRLTKTWALLSRKDKTTFEKLEYVMSKEDNYKRLRDYISSLKMTPCIPYLGIYLSDLTYIDSAYPSTGSILENEQRSNLMNNILRIISDLQQSCEYDIPILPHVQKYLNSVQYIEELQKFVEDDNYKLSLKIEPGASTPRSAASREDLAGPDIGASPQGGRKSSAAAAAAAAAEGALLPQTPPSPRNLIPHGHRKCHSLGYNFIHKMNTAEFKSATFPNAGPRHLLDDSVMEPHAPSRGQAESSTLSSGISIGSSDGSELSEETSWPAFERNRLYHSLGPVTRVPRNGYRSHTKASSSAESEDLAVHLYPGAVTIQGVLRRKTLLKEGKKPTVASWTKYWAALCGTQLFYYAAKSLKATERKHFKSTSNKNVSVVGWMVMMADDPEHPDLFLLTDSEKGNSYKFQAGSRMNAMLWFKHLSAACQSNKQQVPTNLMTFE</sequence>
<dbReference type="EMBL" id="AF312924">
    <property type="protein sequence ID" value="AAG34162.1"/>
    <property type="molecule type" value="mRNA"/>
</dbReference>
<dbReference type="EMBL" id="AK018622">
    <property type="protein sequence ID" value="BAB31312.1"/>
    <property type="molecule type" value="mRNA"/>
</dbReference>
<dbReference type="EMBL" id="AK033549">
    <property type="protein sequence ID" value="BAC28351.1"/>
    <property type="molecule type" value="mRNA"/>
</dbReference>
<dbReference type="EMBL" id="AK036803">
    <property type="protein sequence ID" value="BAC29580.1"/>
    <property type="molecule type" value="mRNA"/>
</dbReference>
<dbReference type="EMBL" id="AK169368">
    <property type="protein sequence ID" value="BAE41116.1"/>
    <property type="molecule type" value="mRNA"/>
</dbReference>
<dbReference type="EMBL" id="BC043132">
    <property type="protein sequence ID" value="AAH43132.1"/>
    <property type="molecule type" value="mRNA"/>
</dbReference>
<dbReference type="EMBL" id="BC052663">
    <property type="protein sequence ID" value="AAH52663.1"/>
    <property type="molecule type" value="mRNA"/>
</dbReference>
<dbReference type="CCDS" id="CCDS15396.1">
    <molecule id="Q9ERD6-1"/>
</dbReference>
<dbReference type="CCDS" id="CCDS48405.1">
    <molecule id="Q9ERD6-2"/>
</dbReference>
<dbReference type="CCDS" id="CCDS48406.1">
    <molecule id="Q9ERD6-3"/>
</dbReference>
<dbReference type="RefSeq" id="NP_001153437.1">
    <molecule id="Q9ERD6-1"/>
    <property type="nucleotide sequence ID" value="NM_001159965.1"/>
</dbReference>
<dbReference type="RefSeq" id="NP_001153438.1">
    <molecule id="Q9ERD6-1"/>
    <property type="nucleotide sequence ID" value="NM_001159966.1"/>
</dbReference>
<dbReference type="RefSeq" id="NP_001153439.1">
    <molecule id="Q9ERD6-3"/>
    <property type="nucleotide sequence ID" value="NM_001159967.1"/>
</dbReference>
<dbReference type="RefSeq" id="NP_001153440.1">
    <molecule id="Q9ERD6-2"/>
    <property type="nucleotide sequence ID" value="NM_001159968.1"/>
</dbReference>
<dbReference type="RefSeq" id="NP_076373.3">
    <molecule id="Q9ERD6-1"/>
    <property type="nucleotide sequence ID" value="NM_023884.4"/>
</dbReference>
<dbReference type="RefSeq" id="XP_006497091.1">
    <molecule id="Q9ERD6-1"/>
    <property type="nucleotide sequence ID" value="XM_006497028.5"/>
</dbReference>
<dbReference type="RefSeq" id="XP_006497092.1">
    <molecule id="Q9ERD6-1"/>
    <property type="nucleotide sequence ID" value="XM_006497029.4"/>
</dbReference>
<dbReference type="RefSeq" id="XP_006497093.1">
    <molecule id="Q9ERD6-1"/>
    <property type="nucleotide sequence ID" value="XM_006497030.4"/>
</dbReference>
<dbReference type="RefSeq" id="XP_006497094.1">
    <molecule id="Q9ERD6-1"/>
    <property type="nucleotide sequence ID" value="XM_006497031.5"/>
</dbReference>
<dbReference type="RefSeq" id="XP_006497095.1">
    <molecule id="Q9ERD6-1"/>
    <property type="nucleotide sequence ID" value="XM_006497032.5"/>
</dbReference>
<dbReference type="RefSeq" id="XP_030099516.1">
    <molecule id="Q9ERD6-3"/>
    <property type="nucleotide sequence ID" value="XM_030243656.2"/>
</dbReference>
<dbReference type="RefSeq" id="XP_030099517.1">
    <molecule id="Q9ERD6-3"/>
    <property type="nucleotide sequence ID" value="XM_030243657.1"/>
</dbReference>
<dbReference type="RefSeq" id="XP_030099520.1">
    <molecule id="Q9ERD6-3"/>
    <property type="nucleotide sequence ID" value="XM_030243660.1"/>
</dbReference>
<dbReference type="SMR" id="Q9ERD6"/>
<dbReference type="BioGRID" id="219285">
    <property type="interactions" value="6"/>
</dbReference>
<dbReference type="FunCoup" id="Q9ERD6">
    <property type="interactions" value="1363"/>
</dbReference>
<dbReference type="STRING" id="10090.ENSMUSP00000130581"/>
<dbReference type="iPTMnet" id="Q9ERD6"/>
<dbReference type="PhosphoSitePlus" id="Q9ERD6"/>
<dbReference type="SwissPalm" id="Q9ERD6"/>
<dbReference type="jPOST" id="Q9ERD6"/>
<dbReference type="PaxDb" id="10090-ENSMUSP00000130581"/>
<dbReference type="ProteomicsDB" id="254943">
    <molecule id="Q9ERD6-1"/>
</dbReference>
<dbReference type="ProteomicsDB" id="254944">
    <molecule id="Q9ERD6-2"/>
</dbReference>
<dbReference type="ProteomicsDB" id="254945">
    <molecule id="Q9ERD6-3"/>
</dbReference>
<dbReference type="ProteomicsDB" id="254946">
    <molecule id="Q9ERD6-4"/>
</dbReference>
<dbReference type="Antibodypedia" id="34414">
    <property type="antibodies" value="97 antibodies from 16 providers"/>
</dbReference>
<dbReference type="DNASU" id="78255"/>
<dbReference type="Ensembl" id="ENSMUST00000027886.14">
    <molecule id="Q9ERD6-3"/>
    <property type="protein sequence ID" value="ENSMUSP00000027886.8"/>
    <property type="gene ID" value="ENSMUSG00000026594.15"/>
</dbReference>
<dbReference type="Ensembl" id="ENSMUST00000063199.13">
    <molecule id="Q9ERD6-1"/>
    <property type="protein sequence ID" value="ENSMUSP00000063872.7"/>
    <property type="gene ID" value="ENSMUSG00000026594.15"/>
</dbReference>
<dbReference type="Ensembl" id="ENSMUST00000171292.8">
    <molecule id="Q9ERD6-1"/>
    <property type="protein sequence ID" value="ENSMUSP00000130581.2"/>
    <property type="gene ID" value="ENSMUSG00000026594.15"/>
</dbReference>
<dbReference type="Ensembl" id="ENSMUST00000172057.8">
    <molecule id="Q9ERD6-2"/>
    <property type="protein sequence ID" value="ENSMUSP00000132533.2"/>
    <property type="gene ID" value="ENSMUSG00000026594.15"/>
</dbReference>
<dbReference type="Ensembl" id="ENSMUST00000185198.7">
    <molecule id="Q9ERD6-4"/>
    <property type="protein sequence ID" value="ENSMUSP00000139618.2"/>
    <property type="gene ID" value="ENSMUSG00000026594.15"/>
</dbReference>
<dbReference type="Ensembl" id="ENSMUST00000191605.7">
    <molecule id="Q9ERD6-1"/>
    <property type="protein sequence ID" value="ENSMUSP00000139645.2"/>
    <property type="gene ID" value="ENSMUSG00000026594.15"/>
</dbReference>
<dbReference type="GeneID" id="78255"/>
<dbReference type="KEGG" id="mmu:78255"/>
<dbReference type="UCSC" id="uc007dcu.2">
    <molecule id="Q9ERD6-1"/>
    <property type="organism name" value="mouse"/>
</dbReference>
<dbReference type="UCSC" id="uc007dcv.2">
    <molecule id="Q9ERD6-3"/>
    <property type="organism name" value="mouse"/>
</dbReference>
<dbReference type="UCSC" id="uc007dcy.2">
    <molecule id="Q9ERD6-4"/>
    <property type="organism name" value="mouse"/>
</dbReference>
<dbReference type="UCSC" id="uc011wuj.1">
    <molecule id="Q9ERD6-2"/>
    <property type="organism name" value="mouse"/>
</dbReference>
<dbReference type="AGR" id="MGI:1925505"/>
<dbReference type="CTD" id="55103"/>
<dbReference type="MGI" id="MGI:1925505">
    <property type="gene designation" value="Ralgps2"/>
</dbReference>
<dbReference type="VEuPathDB" id="HostDB:ENSMUSG00000026594"/>
<dbReference type="eggNOG" id="KOG3417">
    <property type="taxonomic scope" value="Eukaryota"/>
</dbReference>
<dbReference type="GeneTree" id="ENSGT00940000154079"/>
<dbReference type="HOGENOM" id="CLU_021333_0_1_1"/>
<dbReference type="InParanoid" id="Q9ERD6"/>
<dbReference type="OMA" id="XSAESED"/>
<dbReference type="OrthoDB" id="546434at2759"/>
<dbReference type="PhylomeDB" id="Q9ERD6"/>
<dbReference type="TreeFam" id="TF352150"/>
<dbReference type="BioGRID-ORCS" id="78255">
    <property type="hits" value="4 hits in 77 CRISPR screens"/>
</dbReference>
<dbReference type="ChiTaRS" id="Ralgps2">
    <property type="organism name" value="mouse"/>
</dbReference>
<dbReference type="PRO" id="PR:Q9ERD6"/>
<dbReference type="Proteomes" id="UP000000589">
    <property type="component" value="Chromosome 1"/>
</dbReference>
<dbReference type="RNAct" id="Q9ERD6">
    <property type="molecule type" value="protein"/>
</dbReference>
<dbReference type="Bgee" id="ENSMUSG00000026594">
    <property type="expression patterns" value="Expressed in spermatocyte and 267 other cell types or tissues"/>
</dbReference>
<dbReference type="ExpressionAtlas" id="Q9ERD6">
    <property type="expression patterns" value="baseline and differential"/>
</dbReference>
<dbReference type="GO" id="GO:0005737">
    <property type="term" value="C:cytoplasm"/>
    <property type="evidence" value="ECO:0007669"/>
    <property type="project" value="UniProtKB-SubCell"/>
</dbReference>
<dbReference type="GO" id="GO:0005886">
    <property type="term" value="C:plasma membrane"/>
    <property type="evidence" value="ECO:0007669"/>
    <property type="project" value="UniProtKB-SubCell"/>
</dbReference>
<dbReference type="GO" id="GO:0005085">
    <property type="term" value="F:guanyl-nucleotide exchange factor activity"/>
    <property type="evidence" value="ECO:0007669"/>
    <property type="project" value="UniProtKB-KW"/>
</dbReference>
<dbReference type="GO" id="GO:0007264">
    <property type="term" value="P:small GTPase-mediated signal transduction"/>
    <property type="evidence" value="ECO:0007669"/>
    <property type="project" value="InterPro"/>
</dbReference>
<dbReference type="CDD" id="cd13310">
    <property type="entry name" value="PH_RalGPS1_2"/>
    <property type="match status" value="1"/>
</dbReference>
<dbReference type="CDD" id="cd00155">
    <property type="entry name" value="RasGEF"/>
    <property type="match status" value="1"/>
</dbReference>
<dbReference type="FunFam" id="1.10.840.10:FF:000010">
    <property type="entry name" value="ras-specific guanine nucleotide-releasing factor RalGPS1 isoform X1"/>
    <property type="match status" value="1"/>
</dbReference>
<dbReference type="Gene3D" id="2.30.29.30">
    <property type="entry name" value="Pleckstrin-homology domain (PH domain)/Phosphotyrosine-binding domain (PTB)"/>
    <property type="match status" value="1"/>
</dbReference>
<dbReference type="Gene3D" id="1.10.840.10">
    <property type="entry name" value="Ras guanine-nucleotide exchange factors catalytic domain"/>
    <property type="match status" value="1"/>
</dbReference>
<dbReference type="InterPro" id="IPR011993">
    <property type="entry name" value="PH-like_dom_sf"/>
</dbReference>
<dbReference type="InterPro" id="IPR001849">
    <property type="entry name" value="PH_domain"/>
</dbReference>
<dbReference type="InterPro" id="IPR008937">
    <property type="entry name" value="Ras-like_GEF"/>
</dbReference>
<dbReference type="InterPro" id="IPR023578">
    <property type="entry name" value="Ras_GEF_dom_sf"/>
</dbReference>
<dbReference type="InterPro" id="IPR001895">
    <property type="entry name" value="RASGEF_cat_dom"/>
</dbReference>
<dbReference type="InterPro" id="IPR036964">
    <property type="entry name" value="RASGEF_cat_dom_sf"/>
</dbReference>
<dbReference type="PANTHER" id="PTHR23113">
    <property type="entry name" value="GUANINE NUCLEOTIDE EXCHANGE FACTOR"/>
    <property type="match status" value="1"/>
</dbReference>
<dbReference type="PANTHER" id="PTHR23113:SF357">
    <property type="entry name" value="RAS-SPECIFIC GUANINE NUCLEOTIDE-RELEASING FACTOR RALGPS2"/>
    <property type="match status" value="1"/>
</dbReference>
<dbReference type="Pfam" id="PF00169">
    <property type="entry name" value="PH"/>
    <property type="match status" value="1"/>
</dbReference>
<dbReference type="Pfam" id="PF00617">
    <property type="entry name" value="RasGEF"/>
    <property type="match status" value="1"/>
</dbReference>
<dbReference type="SMART" id="SM00233">
    <property type="entry name" value="PH"/>
    <property type="match status" value="1"/>
</dbReference>
<dbReference type="SMART" id="SM00147">
    <property type="entry name" value="RasGEF"/>
    <property type="match status" value="1"/>
</dbReference>
<dbReference type="SUPFAM" id="SSF50729">
    <property type="entry name" value="PH domain-like"/>
    <property type="match status" value="1"/>
</dbReference>
<dbReference type="SUPFAM" id="SSF48366">
    <property type="entry name" value="Ras GEF"/>
    <property type="match status" value="1"/>
</dbReference>
<dbReference type="PROSITE" id="PS50003">
    <property type="entry name" value="PH_DOMAIN"/>
    <property type="match status" value="1"/>
</dbReference>
<dbReference type="PROSITE" id="PS50009">
    <property type="entry name" value="RASGEF_CAT"/>
    <property type="match status" value="1"/>
</dbReference>
<feature type="chain" id="PRO_0000322601" description="Ras-specific guanine nucleotide-releasing factor RalGPS2">
    <location>
        <begin position="1"/>
        <end position="590"/>
    </location>
</feature>
<feature type="domain" description="Ras-GEF" evidence="4">
    <location>
        <begin position="49"/>
        <end position="287"/>
    </location>
</feature>
<feature type="domain" description="PH" evidence="3">
    <location>
        <begin position="464"/>
        <end position="576"/>
    </location>
</feature>
<feature type="region of interest" description="Disordered" evidence="5">
    <location>
        <begin position="288"/>
        <end position="319"/>
    </location>
</feature>
<feature type="region of interest" description="Disordered" evidence="5">
    <location>
        <begin position="380"/>
        <end position="413"/>
    </location>
</feature>
<feature type="region of interest" description="Required for stimulation of nucleotide exchange by RALA" evidence="1">
    <location>
        <begin position="466"/>
        <end position="590"/>
    </location>
</feature>
<feature type="short sequence motif" description="PXXP">
    <location>
        <begin position="331"/>
        <end position="334"/>
    </location>
</feature>
<feature type="compositionally biased region" description="Low complexity" evidence="5">
    <location>
        <begin position="394"/>
        <end position="410"/>
    </location>
</feature>
<feature type="modified residue" description="Phosphoserine" evidence="11">
    <location>
        <position position="293"/>
    </location>
</feature>
<feature type="modified residue" description="Phosphoserine" evidence="11">
    <location>
        <position position="296"/>
    </location>
</feature>
<feature type="modified residue" description="Phosphoserine" evidence="10 11">
    <location>
        <position position="308"/>
    </location>
</feature>
<feature type="modified residue" description="Phosphothreonine" evidence="11">
    <location>
        <position position="333"/>
    </location>
</feature>
<feature type="modified residue" description="Phosphoserine" evidence="11">
    <location>
        <position position="336"/>
    </location>
</feature>
<feature type="modified residue" description="Phosphoserine" evidence="11">
    <location>
        <position position="350"/>
    </location>
</feature>
<feature type="modified residue" description="Phosphothreonine" evidence="2">
    <location>
        <position position="368"/>
    </location>
</feature>
<feature type="modified residue" description="Phosphoserine" evidence="2">
    <location>
        <position position="381"/>
    </location>
</feature>
<feature type="modified residue" description="Phosphoserine" evidence="11">
    <location>
        <position position="429"/>
    </location>
</feature>
<feature type="splice variant" id="VSP_031972" description="In isoform 2." evidence="8">
    <location>
        <begin position="20"/>
        <end position="54"/>
    </location>
</feature>
<feature type="splice variant" id="VSP_031973" description="In isoform 3." evidence="7 8">
    <location>
        <begin position="423"/>
        <end position="448"/>
    </location>
</feature>
<feature type="splice variant" id="VSP_031974" description="In isoform 4." evidence="8">
    <original>NSYKFQAGSRMNAMLWF</original>
    <variation>ERLDRLGSSTADPNSGS</variation>
    <location>
        <begin position="552"/>
        <end position="568"/>
    </location>
</feature>
<feature type="splice variant" id="VSP_031975" description="In isoform 4." evidence="8">
    <location>
        <begin position="569"/>
        <end position="590"/>
    </location>
</feature>
<feature type="sequence conflict" description="In Ref. 1; AAG34162." evidence="9" ref="1">
    <original>I</original>
    <variation>M</variation>
    <location>
        <position position="252"/>
    </location>
</feature>
<feature type="sequence conflict" description="In Ref. 3; AAH52663." evidence="9" ref="3">
    <original>E</original>
    <variation>G</variation>
    <location>
        <position position="298"/>
    </location>
</feature>
<feature type="sequence conflict" description="In Ref. 2; BAC28351." evidence="9" ref="2">
    <original>S</original>
    <variation>T</variation>
    <location>
        <position position="429"/>
    </location>
</feature>
<gene>
    <name type="primary">Ralgps2</name>
</gene>
<keyword id="KW-0025">Alternative splicing</keyword>
<keyword id="KW-1003">Cell membrane</keyword>
<keyword id="KW-0963">Cytoplasm</keyword>
<keyword id="KW-0344">Guanine-nucleotide releasing factor</keyword>
<keyword id="KW-0472">Membrane</keyword>
<keyword id="KW-0597">Phosphoprotein</keyword>
<keyword id="KW-1185">Reference proteome</keyword>
<name>RGPS2_MOUSE</name>
<comment type="function">
    <text evidence="6">Guanine nucleotide exchange factor for the small GTPase RALA. May be involved in cytoskeletal organization. May also be involved in the stimulation of transcription in a Ras-independent fashion.</text>
</comment>
<comment type="subunit">
    <text evidence="1 6">Interacts with RALA (By similarity). Interacts with the SH3 domains of GRB2 and PLCG1.</text>
</comment>
<comment type="subcellular location">
    <subcellularLocation>
        <location evidence="6">Cytoplasm</location>
    </subcellularLocation>
    <subcellularLocation>
        <location evidence="6">Cell membrane</location>
    </subcellularLocation>
    <text>Associates with membranes through the PH domain.</text>
</comment>
<comment type="alternative products">
    <event type="alternative splicing"/>
    <isoform>
        <id>Q9ERD6-1</id>
        <name>1</name>
        <sequence type="displayed"/>
    </isoform>
    <isoform>
        <id>Q9ERD6-2</id>
        <name>2</name>
        <sequence type="described" ref="VSP_031972"/>
    </isoform>
    <isoform>
        <id>Q9ERD6-3</id>
        <name>3</name>
        <sequence type="described" ref="VSP_031973"/>
    </isoform>
    <isoform>
        <id>Q9ERD6-4</id>
        <name>4</name>
        <sequence type="described" ref="VSP_031974 VSP_031975"/>
    </isoform>
</comment>
<comment type="tissue specificity">
    <text evidence="6">Abundant in brain and testis.</text>
</comment>
<comment type="domain">
    <text evidence="6">The PH domain mediates binding to phosphatidylinositol 4,5-bisphosphate.</text>
</comment>